<organism>
    <name type="scientific">Leishmania tarentolae</name>
    <name type="common">Sauroleishmania tarentolae</name>
    <dbReference type="NCBI Taxonomy" id="5689"/>
    <lineage>
        <taxon>Eukaryota</taxon>
        <taxon>Discoba</taxon>
        <taxon>Euglenozoa</taxon>
        <taxon>Kinetoplastea</taxon>
        <taxon>Metakinetoplastina</taxon>
        <taxon>Trypanosomatida</taxon>
        <taxon>Trypanosomatidae</taxon>
        <taxon>Leishmaniinae</taxon>
        <taxon>Leishmania</taxon>
        <taxon>lizard Leishmania</taxon>
    </lineage>
</organism>
<dbReference type="EMBL" id="X68966">
    <property type="protein sequence ID" value="CAA48769.1"/>
    <property type="molecule type" value="Genomic_DNA"/>
</dbReference>
<dbReference type="PIR" id="S29547">
    <property type="entry name" value="S29547"/>
</dbReference>
<dbReference type="SMR" id="P41045"/>
<dbReference type="VEuPathDB" id="TriTrypDB:LtaPh_0909300"/>
<dbReference type="GO" id="GO:0016460">
    <property type="term" value="C:myosin II complex"/>
    <property type="evidence" value="ECO:0007669"/>
    <property type="project" value="TreeGrafter"/>
</dbReference>
<dbReference type="GO" id="GO:0005509">
    <property type="term" value="F:calcium ion binding"/>
    <property type="evidence" value="ECO:0007669"/>
    <property type="project" value="InterPro"/>
</dbReference>
<dbReference type="Gene3D" id="1.10.238.10">
    <property type="entry name" value="EF-hand"/>
    <property type="match status" value="2"/>
</dbReference>
<dbReference type="InterPro" id="IPR050230">
    <property type="entry name" value="CALM/Myosin/TropC-like"/>
</dbReference>
<dbReference type="InterPro" id="IPR011992">
    <property type="entry name" value="EF-hand-dom_pair"/>
</dbReference>
<dbReference type="InterPro" id="IPR002048">
    <property type="entry name" value="EF_hand_dom"/>
</dbReference>
<dbReference type="PANTHER" id="PTHR23048:SF0">
    <property type="entry name" value="CALMODULIN LIKE 3"/>
    <property type="match status" value="1"/>
</dbReference>
<dbReference type="PANTHER" id="PTHR23048">
    <property type="entry name" value="MYOSIN LIGHT CHAIN 1, 3"/>
    <property type="match status" value="1"/>
</dbReference>
<dbReference type="SUPFAM" id="SSF47473">
    <property type="entry name" value="EF-hand"/>
    <property type="match status" value="1"/>
</dbReference>
<dbReference type="PROSITE" id="PS50222">
    <property type="entry name" value="EF_HAND_2"/>
    <property type="match status" value="1"/>
</dbReference>
<evidence type="ECO:0000255" key="1">
    <source>
        <dbReference type="PROSITE-ProRule" id="PRU00448"/>
    </source>
</evidence>
<evidence type="ECO:0000256" key="2">
    <source>
        <dbReference type="SAM" id="MobiDB-lite"/>
    </source>
</evidence>
<evidence type="ECO:0000305" key="3"/>
<protein>
    <recommendedName>
        <fullName>EF-hand protein 5</fullName>
        <shortName>EFH5</shortName>
    </recommendedName>
</protein>
<keyword id="KW-0106">Calcium</keyword>
<keyword id="KW-0479">Metal-binding</keyword>
<keyword id="KW-0677">Repeat</keyword>
<feature type="chain" id="PRO_0000073834" description="EF-hand protein 5">
    <location>
        <begin position="1"/>
        <end position="186"/>
    </location>
</feature>
<feature type="domain" description="EF-hand 1" evidence="3">
    <location>
        <begin position="41"/>
        <end position="76"/>
    </location>
</feature>
<feature type="domain" description="EF-hand 2" evidence="3">
    <location>
        <begin position="77"/>
        <end position="112"/>
    </location>
</feature>
<feature type="domain" description="EF-hand 3" evidence="1">
    <location>
        <begin position="113"/>
        <end position="148"/>
    </location>
</feature>
<feature type="domain" description="EF-hand 4" evidence="3">
    <location>
        <begin position="149"/>
        <end position="186"/>
    </location>
</feature>
<feature type="region of interest" description="Disordered" evidence="2">
    <location>
        <begin position="1"/>
        <end position="23"/>
    </location>
</feature>
<feature type="binding site" evidence="3">
    <location>
        <position position="98"/>
    </location>
    <ligand>
        <name>Ca(2+)</name>
        <dbReference type="ChEBI" id="CHEBI:29108"/>
        <label>1</label>
    </ligand>
</feature>
<feature type="binding site" evidence="3">
    <location>
        <position position="126"/>
    </location>
    <ligand>
        <name>Ca(2+)</name>
        <dbReference type="ChEBI" id="CHEBI:29108"/>
        <label>2</label>
    </ligand>
</feature>
<feature type="binding site" evidence="3">
    <location>
        <position position="130"/>
    </location>
    <ligand>
        <name>Ca(2+)</name>
        <dbReference type="ChEBI" id="CHEBI:29108"/>
        <label>2</label>
    </ligand>
</feature>
<name>EFH5_LEITA</name>
<accession>P41045</accession>
<reference key="1">
    <citation type="submission" date="1992-10" db="EMBL/GenBank/DDBJ databases">
        <title>A homologue of the T. brucel EFH5 gene in leishmania tarentolae.</title>
        <authorList>
            <person name="Campbell D.L."/>
            <person name="Elgort M.G."/>
            <person name="Fleischmann J."/>
            <person name="Kurath U."/>
        </authorList>
    </citation>
    <scope>NUCLEOTIDE SEQUENCE [GENOMIC DNA]</scope>
    <source>
        <strain>UC</strain>
    </source>
</reference>
<reference key="2">
    <citation type="submission" date="1994-09" db="EMBL/GenBank/DDBJ databases">
        <authorList>
            <person name="Campbell D.L."/>
        </authorList>
    </citation>
    <scope>SEQUENCE REVISION</scope>
</reference>
<comment type="miscellaneous">
    <text>This protein has four EF-hand homolog domains, two of which may be functional calcium-binding sites.</text>
</comment>
<sequence>MSRSKEVSPNLSQQKRGDVRSAGISGFSSPIYRGRLNHSASAELQEGYRILTGGQKANIISDKDLFKAIHSCGLHTSEEEVNDLLRVVHQDERTLGLEFPEFMMLMTKGIDEASIAEMRRPFSVLDKAKTGVITKKQFTELFVSSGEHSSAEELEELMLLAETSEELEVVDYNKLINELAILLNKM</sequence>
<proteinExistence type="predicted"/>